<name>PYRF_PROMT</name>
<reference key="1">
    <citation type="journal article" date="2007" name="PLoS Genet.">
        <title>Patterns and implications of gene gain and loss in the evolution of Prochlorococcus.</title>
        <authorList>
            <person name="Kettler G.C."/>
            <person name="Martiny A.C."/>
            <person name="Huang K."/>
            <person name="Zucker J."/>
            <person name="Coleman M.L."/>
            <person name="Rodrigue S."/>
            <person name="Chen F."/>
            <person name="Lapidus A."/>
            <person name="Ferriera S."/>
            <person name="Johnson J."/>
            <person name="Steglich C."/>
            <person name="Church G.M."/>
            <person name="Richardson P."/>
            <person name="Chisholm S.W."/>
        </authorList>
    </citation>
    <scope>NUCLEOTIDE SEQUENCE [LARGE SCALE GENOMIC DNA]</scope>
    <source>
        <strain>NATL2A</strain>
    </source>
</reference>
<feature type="chain" id="PRO_0000241886" description="Orotidine 5'-phosphate decarboxylase">
    <location>
        <begin position="1"/>
        <end position="241"/>
    </location>
</feature>
<feature type="active site" description="Proton donor" evidence="1">
    <location>
        <position position="66"/>
    </location>
</feature>
<feature type="binding site" evidence="1">
    <location>
        <position position="16"/>
    </location>
    <ligand>
        <name>substrate</name>
    </ligand>
</feature>
<feature type="binding site" evidence="1">
    <location>
        <position position="37"/>
    </location>
    <ligand>
        <name>substrate</name>
    </ligand>
</feature>
<feature type="binding site" evidence="1">
    <location>
        <begin position="64"/>
        <end position="73"/>
    </location>
    <ligand>
        <name>substrate</name>
    </ligand>
</feature>
<feature type="binding site" evidence="1">
    <location>
        <position position="128"/>
    </location>
    <ligand>
        <name>substrate</name>
    </ligand>
</feature>
<feature type="binding site" evidence="1">
    <location>
        <position position="190"/>
    </location>
    <ligand>
        <name>substrate</name>
    </ligand>
</feature>
<feature type="binding site" evidence="1">
    <location>
        <position position="199"/>
    </location>
    <ligand>
        <name>substrate</name>
    </ligand>
</feature>
<feature type="binding site" evidence="1">
    <location>
        <position position="219"/>
    </location>
    <ligand>
        <name>substrate</name>
    </ligand>
</feature>
<feature type="binding site" evidence="1">
    <location>
        <position position="220"/>
    </location>
    <ligand>
        <name>substrate</name>
    </ligand>
</feature>
<proteinExistence type="inferred from homology"/>
<gene>
    <name evidence="1" type="primary">pyrF</name>
    <name type="ordered locus">PMN2A_0899</name>
</gene>
<comment type="function">
    <text evidence="1">Catalyzes the decarboxylation of orotidine 5'-monophosphate (OMP) to uridine 5'-monophosphate (UMP).</text>
</comment>
<comment type="catalytic activity">
    <reaction evidence="1">
        <text>orotidine 5'-phosphate + H(+) = UMP + CO2</text>
        <dbReference type="Rhea" id="RHEA:11596"/>
        <dbReference type="ChEBI" id="CHEBI:15378"/>
        <dbReference type="ChEBI" id="CHEBI:16526"/>
        <dbReference type="ChEBI" id="CHEBI:57538"/>
        <dbReference type="ChEBI" id="CHEBI:57865"/>
        <dbReference type="EC" id="4.1.1.23"/>
    </reaction>
</comment>
<comment type="pathway">
    <text evidence="1">Pyrimidine metabolism; UMP biosynthesis via de novo pathway; UMP from orotate: step 2/2.</text>
</comment>
<comment type="subunit">
    <text evidence="1">Homodimer.</text>
</comment>
<comment type="similarity">
    <text evidence="1">Belongs to the OMP decarboxylase family. Type 1 subfamily.</text>
</comment>
<dbReference type="EC" id="4.1.1.23" evidence="1"/>
<dbReference type="EMBL" id="CP000095">
    <property type="protein sequence ID" value="AAZ58390.1"/>
    <property type="molecule type" value="Genomic_DNA"/>
</dbReference>
<dbReference type="RefSeq" id="WP_011295247.1">
    <property type="nucleotide sequence ID" value="NC_007335.2"/>
</dbReference>
<dbReference type="SMR" id="Q46JD8"/>
<dbReference type="STRING" id="59920.PMN2A_0899"/>
<dbReference type="KEGG" id="pmn:PMN2A_0899"/>
<dbReference type="HOGENOM" id="CLU_067069_1_0_3"/>
<dbReference type="OrthoDB" id="9806203at2"/>
<dbReference type="PhylomeDB" id="Q46JD8"/>
<dbReference type="UniPathway" id="UPA00070">
    <property type="reaction ID" value="UER00120"/>
</dbReference>
<dbReference type="Proteomes" id="UP000002535">
    <property type="component" value="Chromosome"/>
</dbReference>
<dbReference type="GO" id="GO:0005829">
    <property type="term" value="C:cytosol"/>
    <property type="evidence" value="ECO:0007669"/>
    <property type="project" value="TreeGrafter"/>
</dbReference>
<dbReference type="GO" id="GO:0004590">
    <property type="term" value="F:orotidine-5'-phosphate decarboxylase activity"/>
    <property type="evidence" value="ECO:0007669"/>
    <property type="project" value="UniProtKB-UniRule"/>
</dbReference>
<dbReference type="GO" id="GO:0006207">
    <property type="term" value="P:'de novo' pyrimidine nucleobase biosynthetic process"/>
    <property type="evidence" value="ECO:0007669"/>
    <property type="project" value="InterPro"/>
</dbReference>
<dbReference type="GO" id="GO:0044205">
    <property type="term" value="P:'de novo' UMP biosynthetic process"/>
    <property type="evidence" value="ECO:0007669"/>
    <property type="project" value="UniProtKB-UniRule"/>
</dbReference>
<dbReference type="CDD" id="cd04725">
    <property type="entry name" value="OMP_decarboxylase_like"/>
    <property type="match status" value="1"/>
</dbReference>
<dbReference type="Gene3D" id="3.20.20.70">
    <property type="entry name" value="Aldolase class I"/>
    <property type="match status" value="1"/>
</dbReference>
<dbReference type="HAMAP" id="MF_01200_B">
    <property type="entry name" value="OMPdecase_type1_B"/>
    <property type="match status" value="1"/>
</dbReference>
<dbReference type="InterPro" id="IPR013785">
    <property type="entry name" value="Aldolase_TIM"/>
</dbReference>
<dbReference type="InterPro" id="IPR014732">
    <property type="entry name" value="OMPdecase"/>
</dbReference>
<dbReference type="InterPro" id="IPR018089">
    <property type="entry name" value="OMPdecase_AS"/>
</dbReference>
<dbReference type="InterPro" id="IPR047596">
    <property type="entry name" value="OMPdecase_bac"/>
</dbReference>
<dbReference type="InterPro" id="IPR001754">
    <property type="entry name" value="OMPdeCOase_dom"/>
</dbReference>
<dbReference type="InterPro" id="IPR011060">
    <property type="entry name" value="RibuloseP-bd_barrel"/>
</dbReference>
<dbReference type="NCBIfam" id="NF001273">
    <property type="entry name" value="PRK00230.1"/>
    <property type="match status" value="1"/>
</dbReference>
<dbReference type="NCBIfam" id="TIGR01740">
    <property type="entry name" value="pyrF"/>
    <property type="match status" value="1"/>
</dbReference>
<dbReference type="PANTHER" id="PTHR32119">
    <property type="entry name" value="OROTIDINE 5'-PHOSPHATE DECARBOXYLASE"/>
    <property type="match status" value="1"/>
</dbReference>
<dbReference type="PANTHER" id="PTHR32119:SF2">
    <property type="entry name" value="OROTIDINE 5'-PHOSPHATE DECARBOXYLASE"/>
    <property type="match status" value="1"/>
</dbReference>
<dbReference type="Pfam" id="PF00215">
    <property type="entry name" value="OMPdecase"/>
    <property type="match status" value="1"/>
</dbReference>
<dbReference type="SMART" id="SM00934">
    <property type="entry name" value="OMPdecase"/>
    <property type="match status" value="1"/>
</dbReference>
<dbReference type="SUPFAM" id="SSF51366">
    <property type="entry name" value="Ribulose-phoshate binding barrel"/>
    <property type="match status" value="1"/>
</dbReference>
<dbReference type="PROSITE" id="PS00156">
    <property type="entry name" value="OMPDECASE"/>
    <property type="match status" value="1"/>
</dbReference>
<protein>
    <recommendedName>
        <fullName evidence="1">Orotidine 5'-phosphate decarboxylase</fullName>
        <ecNumber evidence="1">4.1.1.23</ecNumber>
    </recommendedName>
    <alternativeName>
        <fullName evidence="1">OMP decarboxylase</fullName>
        <shortName evidence="1">OMPDCase</shortName>
        <shortName evidence="1">OMPdecase</shortName>
    </alternativeName>
</protein>
<accession>Q46JD8</accession>
<sequence>MKNIDNPSEKIIIALDGMDKDDVVNLLKKIPEIVWVKVGLELFVSEGPDVLSMLREKGKKIFLDLKFHDIPTTVARACFAASQTGAEFISLHTCAGMKALKMANEAAKEGAAKVNLIPPKLLGITILTSWTRESFCNDLLINQSINQRVKHLAEIASNSGLGGCVCSPKEVQFLRESYPETFELITPGIRSLGSNINDQSRVSDASEAIKMGASKLVIGRAITQSNDSAYMFKSFCDKISI</sequence>
<evidence type="ECO:0000255" key="1">
    <source>
        <dbReference type="HAMAP-Rule" id="MF_01200"/>
    </source>
</evidence>
<organism>
    <name type="scientific">Prochlorococcus marinus (strain NATL2A)</name>
    <dbReference type="NCBI Taxonomy" id="59920"/>
    <lineage>
        <taxon>Bacteria</taxon>
        <taxon>Bacillati</taxon>
        <taxon>Cyanobacteriota</taxon>
        <taxon>Cyanophyceae</taxon>
        <taxon>Synechococcales</taxon>
        <taxon>Prochlorococcaceae</taxon>
        <taxon>Prochlorococcus</taxon>
    </lineage>
</organism>
<keyword id="KW-0210">Decarboxylase</keyword>
<keyword id="KW-0456">Lyase</keyword>
<keyword id="KW-0665">Pyrimidine biosynthesis</keyword>
<keyword id="KW-1185">Reference proteome</keyword>